<sequence length="154" mass="16396">MNFEGKLIGKDLKVAIVVSRFNDFITGRLLEGAKDTLIRHDVNEDNIDVAFVPGAFEIPLVAKKLASSGNYDAVITLGCVIRGATSHYDYVCNEVAKGVSKVNDQTNVPVIFGILTTESIEQAVERAGTKAGNKGAEAAVSAIEMANLLKSIKA</sequence>
<evidence type="ECO:0000255" key="1">
    <source>
        <dbReference type="HAMAP-Rule" id="MF_00178"/>
    </source>
</evidence>
<keyword id="KW-0686">Riboflavin biosynthesis</keyword>
<keyword id="KW-0808">Transferase</keyword>
<dbReference type="EC" id="2.5.1.78" evidence="1"/>
<dbReference type="EMBL" id="AP009351">
    <property type="protein sequence ID" value="BAF67931.1"/>
    <property type="molecule type" value="Genomic_DNA"/>
</dbReference>
<dbReference type="SMR" id="A6QHU9"/>
<dbReference type="KEGG" id="sae:NWMN_1659"/>
<dbReference type="HOGENOM" id="CLU_089358_1_1_9"/>
<dbReference type="UniPathway" id="UPA00275">
    <property type="reaction ID" value="UER00404"/>
</dbReference>
<dbReference type="Proteomes" id="UP000006386">
    <property type="component" value="Chromosome"/>
</dbReference>
<dbReference type="GO" id="GO:0005829">
    <property type="term" value="C:cytosol"/>
    <property type="evidence" value="ECO:0007669"/>
    <property type="project" value="TreeGrafter"/>
</dbReference>
<dbReference type="GO" id="GO:0009349">
    <property type="term" value="C:riboflavin synthase complex"/>
    <property type="evidence" value="ECO:0007669"/>
    <property type="project" value="InterPro"/>
</dbReference>
<dbReference type="GO" id="GO:0000906">
    <property type="term" value="F:6,7-dimethyl-8-ribityllumazine synthase activity"/>
    <property type="evidence" value="ECO:0007669"/>
    <property type="project" value="UniProtKB-UniRule"/>
</dbReference>
<dbReference type="GO" id="GO:0009231">
    <property type="term" value="P:riboflavin biosynthetic process"/>
    <property type="evidence" value="ECO:0007669"/>
    <property type="project" value="UniProtKB-UniRule"/>
</dbReference>
<dbReference type="CDD" id="cd09209">
    <property type="entry name" value="Lumazine_synthase-I"/>
    <property type="match status" value="1"/>
</dbReference>
<dbReference type="FunFam" id="3.40.50.960:FF:000001">
    <property type="entry name" value="6,7-dimethyl-8-ribityllumazine synthase"/>
    <property type="match status" value="1"/>
</dbReference>
<dbReference type="Gene3D" id="3.40.50.960">
    <property type="entry name" value="Lumazine/riboflavin synthase"/>
    <property type="match status" value="1"/>
</dbReference>
<dbReference type="HAMAP" id="MF_00178">
    <property type="entry name" value="Lumazine_synth"/>
    <property type="match status" value="1"/>
</dbReference>
<dbReference type="InterPro" id="IPR034964">
    <property type="entry name" value="LS"/>
</dbReference>
<dbReference type="InterPro" id="IPR002180">
    <property type="entry name" value="LS/RS"/>
</dbReference>
<dbReference type="InterPro" id="IPR036467">
    <property type="entry name" value="LS/RS_sf"/>
</dbReference>
<dbReference type="NCBIfam" id="TIGR00114">
    <property type="entry name" value="lumazine-synth"/>
    <property type="match status" value="1"/>
</dbReference>
<dbReference type="NCBIfam" id="NF000812">
    <property type="entry name" value="PRK00061.1-4"/>
    <property type="match status" value="1"/>
</dbReference>
<dbReference type="PANTHER" id="PTHR21058:SF0">
    <property type="entry name" value="6,7-DIMETHYL-8-RIBITYLLUMAZINE SYNTHASE"/>
    <property type="match status" value="1"/>
</dbReference>
<dbReference type="PANTHER" id="PTHR21058">
    <property type="entry name" value="6,7-DIMETHYL-8-RIBITYLLUMAZINE SYNTHASE DMRL SYNTHASE LUMAZINE SYNTHASE"/>
    <property type="match status" value="1"/>
</dbReference>
<dbReference type="Pfam" id="PF00885">
    <property type="entry name" value="DMRL_synthase"/>
    <property type="match status" value="1"/>
</dbReference>
<dbReference type="SUPFAM" id="SSF52121">
    <property type="entry name" value="Lumazine synthase"/>
    <property type="match status" value="1"/>
</dbReference>
<feature type="chain" id="PRO_1000071646" description="6,7-dimethyl-8-ribityllumazine synthase">
    <location>
        <begin position="1"/>
        <end position="154"/>
    </location>
</feature>
<feature type="active site" description="Proton donor" evidence="1">
    <location>
        <position position="87"/>
    </location>
</feature>
<feature type="binding site" evidence="1">
    <location>
        <position position="21"/>
    </location>
    <ligand>
        <name>5-amino-6-(D-ribitylamino)uracil</name>
        <dbReference type="ChEBI" id="CHEBI:15934"/>
    </ligand>
</feature>
<feature type="binding site" evidence="1">
    <location>
        <begin position="55"/>
        <end position="57"/>
    </location>
    <ligand>
        <name>5-amino-6-(D-ribitylamino)uracil</name>
        <dbReference type="ChEBI" id="CHEBI:15934"/>
    </ligand>
</feature>
<feature type="binding site" evidence="1">
    <location>
        <begin position="79"/>
        <end position="81"/>
    </location>
    <ligand>
        <name>5-amino-6-(D-ribitylamino)uracil</name>
        <dbReference type="ChEBI" id="CHEBI:15934"/>
    </ligand>
</feature>
<feature type="binding site" evidence="1">
    <location>
        <begin position="84"/>
        <end position="85"/>
    </location>
    <ligand>
        <name>(2S)-2-hydroxy-3-oxobutyl phosphate</name>
        <dbReference type="ChEBI" id="CHEBI:58830"/>
    </ligand>
</feature>
<feature type="binding site" evidence="1">
    <location>
        <position position="112"/>
    </location>
    <ligand>
        <name>5-amino-6-(D-ribitylamino)uracil</name>
        <dbReference type="ChEBI" id="CHEBI:15934"/>
    </ligand>
</feature>
<feature type="binding site" evidence="1">
    <location>
        <position position="126"/>
    </location>
    <ligand>
        <name>(2S)-2-hydroxy-3-oxobutyl phosphate</name>
        <dbReference type="ChEBI" id="CHEBI:58830"/>
    </ligand>
</feature>
<protein>
    <recommendedName>
        <fullName evidence="1">6,7-dimethyl-8-ribityllumazine synthase</fullName>
        <shortName evidence="1">DMRL synthase</shortName>
        <shortName evidence="1">LS</shortName>
        <shortName evidence="1">Lumazine synthase</shortName>
        <ecNumber evidence="1">2.5.1.78</ecNumber>
    </recommendedName>
</protein>
<reference key="1">
    <citation type="journal article" date="2008" name="J. Bacteriol.">
        <title>Genome sequence of Staphylococcus aureus strain Newman and comparative analysis of staphylococcal genomes: polymorphism and evolution of two major pathogenicity islands.</title>
        <authorList>
            <person name="Baba T."/>
            <person name="Bae T."/>
            <person name="Schneewind O."/>
            <person name="Takeuchi F."/>
            <person name="Hiramatsu K."/>
        </authorList>
    </citation>
    <scope>NUCLEOTIDE SEQUENCE [LARGE SCALE GENOMIC DNA]</scope>
    <source>
        <strain>Newman</strain>
    </source>
</reference>
<organism>
    <name type="scientific">Staphylococcus aureus (strain Newman)</name>
    <dbReference type="NCBI Taxonomy" id="426430"/>
    <lineage>
        <taxon>Bacteria</taxon>
        <taxon>Bacillati</taxon>
        <taxon>Bacillota</taxon>
        <taxon>Bacilli</taxon>
        <taxon>Bacillales</taxon>
        <taxon>Staphylococcaceae</taxon>
        <taxon>Staphylococcus</taxon>
    </lineage>
</organism>
<proteinExistence type="inferred from homology"/>
<gene>
    <name evidence="1" type="primary">ribH</name>
    <name type="ordered locus">NWMN_1659</name>
</gene>
<name>RISB_STAAE</name>
<comment type="function">
    <text evidence="1">Catalyzes the formation of 6,7-dimethyl-8-ribityllumazine by condensation of 5-amino-6-(D-ribitylamino)uracil with 3,4-dihydroxy-2-butanone 4-phosphate. This is the penultimate step in the biosynthesis of riboflavin.</text>
</comment>
<comment type="catalytic activity">
    <reaction evidence="1">
        <text>(2S)-2-hydroxy-3-oxobutyl phosphate + 5-amino-6-(D-ribitylamino)uracil = 6,7-dimethyl-8-(1-D-ribityl)lumazine + phosphate + 2 H2O + H(+)</text>
        <dbReference type="Rhea" id="RHEA:26152"/>
        <dbReference type="ChEBI" id="CHEBI:15377"/>
        <dbReference type="ChEBI" id="CHEBI:15378"/>
        <dbReference type="ChEBI" id="CHEBI:15934"/>
        <dbReference type="ChEBI" id="CHEBI:43474"/>
        <dbReference type="ChEBI" id="CHEBI:58201"/>
        <dbReference type="ChEBI" id="CHEBI:58830"/>
        <dbReference type="EC" id="2.5.1.78"/>
    </reaction>
</comment>
<comment type="pathway">
    <text evidence="1">Cofactor biosynthesis; riboflavin biosynthesis; riboflavin from 2-hydroxy-3-oxobutyl phosphate and 5-amino-6-(D-ribitylamino)uracil: step 1/2.</text>
</comment>
<comment type="subunit">
    <text evidence="1">Forms an icosahedral capsid composed of 60 subunits, arranged as a dodecamer of pentamers.</text>
</comment>
<comment type="similarity">
    <text evidence="1">Belongs to the DMRL synthase family.</text>
</comment>
<accession>A6QHU9</accession>